<protein>
    <recommendedName>
        <fullName evidence="1">1-(5-phosphoribosyl)-5-[(5-phosphoribosylamino)methylideneamino] imidazole-4-carboxamide isomerase</fullName>
        <ecNumber evidence="1">5.3.1.16</ecNumber>
    </recommendedName>
    <alternativeName>
        <fullName evidence="1">Phosphoribosylformimino-5-aminoimidazole carboxamide ribotide isomerase</fullName>
    </alternativeName>
</protein>
<name>HIS4_ECOLC</name>
<keyword id="KW-0028">Amino-acid biosynthesis</keyword>
<keyword id="KW-0963">Cytoplasm</keyword>
<keyword id="KW-0368">Histidine biosynthesis</keyword>
<keyword id="KW-0413">Isomerase</keyword>
<comment type="catalytic activity">
    <reaction evidence="1">
        <text>1-(5-phospho-beta-D-ribosyl)-5-[(5-phospho-beta-D-ribosylamino)methylideneamino]imidazole-4-carboxamide = 5-[(5-phospho-1-deoxy-D-ribulos-1-ylimino)methylamino]-1-(5-phospho-beta-D-ribosyl)imidazole-4-carboxamide</text>
        <dbReference type="Rhea" id="RHEA:15469"/>
        <dbReference type="ChEBI" id="CHEBI:58435"/>
        <dbReference type="ChEBI" id="CHEBI:58525"/>
        <dbReference type="EC" id="5.3.1.16"/>
    </reaction>
</comment>
<comment type="pathway">
    <text evidence="1">Amino-acid biosynthesis; L-histidine biosynthesis; L-histidine from 5-phospho-alpha-D-ribose 1-diphosphate: step 4/9.</text>
</comment>
<comment type="subcellular location">
    <subcellularLocation>
        <location evidence="1">Cytoplasm</location>
    </subcellularLocation>
</comment>
<comment type="similarity">
    <text evidence="1">Belongs to the HisA/HisF family.</text>
</comment>
<dbReference type="EC" id="5.3.1.16" evidence="1"/>
<dbReference type="EMBL" id="CP000946">
    <property type="protein sequence ID" value="ACA77276.1"/>
    <property type="molecule type" value="Genomic_DNA"/>
</dbReference>
<dbReference type="RefSeq" id="WP_000586515.1">
    <property type="nucleotide sequence ID" value="NC_010468.1"/>
</dbReference>
<dbReference type="SMR" id="B1IZ50"/>
<dbReference type="KEGG" id="ecl:EcolC_1618"/>
<dbReference type="HOGENOM" id="CLU_048577_1_2_6"/>
<dbReference type="UniPathway" id="UPA00031">
    <property type="reaction ID" value="UER00009"/>
</dbReference>
<dbReference type="GO" id="GO:0005737">
    <property type="term" value="C:cytoplasm"/>
    <property type="evidence" value="ECO:0007669"/>
    <property type="project" value="UniProtKB-SubCell"/>
</dbReference>
<dbReference type="GO" id="GO:0003949">
    <property type="term" value="F:1-(5-phosphoribosyl)-5-[(5-phosphoribosylamino)methylideneamino]imidazole-4-carboxamide isomerase activity"/>
    <property type="evidence" value="ECO:0007669"/>
    <property type="project" value="UniProtKB-UniRule"/>
</dbReference>
<dbReference type="GO" id="GO:0000105">
    <property type="term" value="P:L-histidine biosynthetic process"/>
    <property type="evidence" value="ECO:0007669"/>
    <property type="project" value="UniProtKB-UniRule"/>
</dbReference>
<dbReference type="GO" id="GO:0000162">
    <property type="term" value="P:L-tryptophan biosynthetic process"/>
    <property type="evidence" value="ECO:0007669"/>
    <property type="project" value="TreeGrafter"/>
</dbReference>
<dbReference type="CDD" id="cd04732">
    <property type="entry name" value="HisA"/>
    <property type="match status" value="1"/>
</dbReference>
<dbReference type="FunFam" id="3.20.20.70:FF:000009">
    <property type="entry name" value="1-(5-phosphoribosyl)-5-[(5-phosphoribosylamino)methylideneamino] imidazole-4-carboxamide isomerase"/>
    <property type="match status" value="1"/>
</dbReference>
<dbReference type="Gene3D" id="3.20.20.70">
    <property type="entry name" value="Aldolase class I"/>
    <property type="match status" value="1"/>
</dbReference>
<dbReference type="HAMAP" id="MF_01014">
    <property type="entry name" value="HisA"/>
    <property type="match status" value="1"/>
</dbReference>
<dbReference type="InterPro" id="IPR013785">
    <property type="entry name" value="Aldolase_TIM"/>
</dbReference>
<dbReference type="InterPro" id="IPR006062">
    <property type="entry name" value="His_biosynth"/>
</dbReference>
<dbReference type="InterPro" id="IPR006063">
    <property type="entry name" value="HisA_bact_arch"/>
</dbReference>
<dbReference type="InterPro" id="IPR044524">
    <property type="entry name" value="Isoase_HisA-like"/>
</dbReference>
<dbReference type="InterPro" id="IPR023016">
    <property type="entry name" value="Isoase_HisA-like_bact"/>
</dbReference>
<dbReference type="InterPro" id="IPR011060">
    <property type="entry name" value="RibuloseP-bd_barrel"/>
</dbReference>
<dbReference type="NCBIfam" id="TIGR00007">
    <property type="entry name" value="1-(5-phosphoribosyl)-5-[(5-phosphoribosylamino)methylideneamino]imidazole-4-carboxamide isomerase"/>
    <property type="match status" value="1"/>
</dbReference>
<dbReference type="PANTHER" id="PTHR43090">
    <property type="entry name" value="1-(5-PHOSPHORIBOSYL)-5-[(5-PHOSPHORIBOSYLAMINO)METHYLIDENEAMINO] IMIDAZOLE-4-CARBOXAMIDE ISOMERASE"/>
    <property type="match status" value="1"/>
</dbReference>
<dbReference type="PANTHER" id="PTHR43090:SF2">
    <property type="entry name" value="1-(5-PHOSPHORIBOSYL)-5-[(5-PHOSPHORIBOSYLAMINO)METHYLIDENEAMINO] IMIDAZOLE-4-CARBOXAMIDE ISOMERASE"/>
    <property type="match status" value="1"/>
</dbReference>
<dbReference type="Pfam" id="PF00977">
    <property type="entry name" value="His_biosynth"/>
    <property type="match status" value="1"/>
</dbReference>
<dbReference type="SUPFAM" id="SSF51366">
    <property type="entry name" value="Ribulose-phoshate binding barrel"/>
    <property type="match status" value="1"/>
</dbReference>
<sequence>MIIPALDLINGTVVRLHQGDYGKQRDYGNDPLPRLQDYAAQGAEVLHLVDLTGAKDPAKRQIPLIKTLVAGVNVPVQVGGGVRSEEDVAALLEAGVARVVVGSTAVKSPEMVKGWFERFGADALVLALDVRIDEQGNKQVAVSGWQENSGVSLEQLVETYLPVGLKHVLCTDISRDGTLAGSNVSLYEEVCARYPQVAFQSSGGIGDINDVAALRGTGVRGVIVGRALLEGKFTVKEAIACWQNA</sequence>
<proteinExistence type="inferred from homology"/>
<reference key="1">
    <citation type="submission" date="2008-02" db="EMBL/GenBank/DDBJ databases">
        <title>Complete sequence of Escherichia coli C str. ATCC 8739.</title>
        <authorList>
            <person name="Copeland A."/>
            <person name="Lucas S."/>
            <person name="Lapidus A."/>
            <person name="Glavina del Rio T."/>
            <person name="Dalin E."/>
            <person name="Tice H."/>
            <person name="Bruce D."/>
            <person name="Goodwin L."/>
            <person name="Pitluck S."/>
            <person name="Kiss H."/>
            <person name="Brettin T."/>
            <person name="Detter J.C."/>
            <person name="Han C."/>
            <person name="Kuske C.R."/>
            <person name="Schmutz J."/>
            <person name="Larimer F."/>
            <person name="Land M."/>
            <person name="Hauser L."/>
            <person name="Kyrpides N."/>
            <person name="Mikhailova N."/>
            <person name="Ingram L."/>
            <person name="Richardson P."/>
        </authorList>
    </citation>
    <scope>NUCLEOTIDE SEQUENCE [LARGE SCALE GENOMIC DNA]</scope>
    <source>
        <strain>ATCC 8739 / DSM 1576 / NBRC 3972 / NCIMB 8545 / WDCM 00012 / Crooks</strain>
    </source>
</reference>
<accession>B1IZ50</accession>
<gene>
    <name evidence="1" type="primary">hisA</name>
    <name type="ordered locus">EcolC_1618</name>
</gene>
<evidence type="ECO:0000255" key="1">
    <source>
        <dbReference type="HAMAP-Rule" id="MF_01014"/>
    </source>
</evidence>
<organism>
    <name type="scientific">Escherichia coli (strain ATCC 8739 / DSM 1576 / NBRC 3972 / NCIMB 8545 / WDCM 00012 / Crooks)</name>
    <dbReference type="NCBI Taxonomy" id="481805"/>
    <lineage>
        <taxon>Bacteria</taxon>
        <taxon>Pseudomonadati</taxon>
        <taxon>Pseudomonadota</taxon>
        <taxon>Gammaproteobacteria</taxon>
        <taxon>Enterobacterales</taxon>
        <taxon>Enterobacteriaceae</taxon>
        <taxon>Escherichia</taxon>
    </lineage>
</organism>
<feature type="chain" id="PRO_1000084097" description="1-(5-phosphoribosyl)-5-[(5-phosphoribosylamino)methylideneamino] imidazole-4-carboxamide isomerase">
    <location>
        <begin position="1"/>
        <end position="245"/>
    </location>
</feature>
<feature type="active site" description="Proton acceptor" evidence="1">
    <location>
        <position position="7"/>
    </location>
</feature>
<feature type="active site" description="Proton donor" evidence="1">
    <location>
        <position position="129"/>
    </location>
</feature>